<name>PSBI_PROMP</name>
<feature type="chain" id="PRO_5000096434" description="Photosystem II reaction center protein I">
    <location>
        <begin position="1"/>
        <end position="42"/>
    </location>
</feature>
<feature type="transmembrane region" description="Helical" evidence="1">
    <location>
        <begin position="6"/>
        <end position="26"/>
    </location>
</feature>
<organism>
    <name type="scientific">Prochlorococcus marinus subsp. pastoris (strain CCMP1986 / NIES-2087 / MED4)</name>
    <dbReference type="NCBI Taxonomy" id="59919"/>
    <lineage>
        <taxon>Bacteria</taxon>
        <taxon>Bacillati</taxon>
        <taxon>Cyanobacteriota</taxon>
        <taxon>Cyanophyceae</taxon>
        <taxon>Synechococcales</taxon>
        <taxon>Prochlorococcaceae</taxon>
        <taxon>Prochlorococcus</taxon>
    </lineage>
</organism>
<keyword id="KW-0472">Membrane</keyword>
<keyword id="KW-0602">Photosynthesis</keyword>
<keyword id="KW-0604">Photosystem II</keyword>
<keyword id="KW-0674">Reaction center</keyword>
<keyword id="KW-0793">Thylakoid</keyword>
<keyword id="KW-0812">Transmembrane</keyword>
<keyword id="KW-1133">Transmembrane helix</keyword>
<evidence type="ECO:0000255" key="1">
    <source>
        <dbReference type="HAMAP-Rule" id="MF_01316"/>
    </source>
</evidence>
<evidence type="ECO:0000305" key="2"/>
<proteinExistence type="inferred from homology"/>
<reference key="1">
    <citation type="journal article" date="2003" name="Nature">
        <title>Genome divergence in two Prochlorococcus ecotypes reflects oceanic niche differentiation.</title>
        <authorList>
            <person name="Rocap G."/>
            <person name="Larimer F.W."/>
            <person name="Lamerdin J.E."/>
            <person name="Malfatti S."/>
            <person name="Chain P."/>
            <person name="Ahlgren N.A."/>
            <person name="Arellano A."/>
            <person name="Coleman M."/>
            <person name="Hauser L."/>
            <person name="Hess W.R."/>
            <person name="Johnson Z.I."/>
            <person name="Land M.L."/>
            <person name="Lindell D."/>
            <person name="Post A.F."/>
            <person name="Regala W."/>
            <person name="Shah M."/>
            <person name="Shaw S.L."/>
            <person name="Steglich C."/>
            <person name="Sullivan M.B."/>
            <person name="Ting C.S."/>
            <person name="Tolonen A."/>
            <person name="Webb E.A."/>
            <person name="Zinser E.R."/>
            <person name="Chisholm S.W."/>
        </authorList>
    </citation>
    <scope>NUCLEOTIDE SEQUENCE [LARGE SCALE GENOMIC DNA]</scope>
    <source>
        <strain>CCMP1986 / NIES-2087 / MED4</strain>
    </source>
</reference>
<accession>Q7V339</accession>
<gene>
    <name evidence="1" type="primary">psbI</name>
    <name type="ordered locus">PMM0253</name>
</gene>
<sequence length="42" mass="4796">MLALKISVYTIVFFFVGIFLFGFLASDPTRTPNRKDLESPQD</sequence>
<comment type="function">
    <text evidence="1">One of the components of the core complex of photosystem II (PSII), required for its stability and/or assembly. PSII is a light-driven water:plastoquinone oxidoreductase that uses light energy to abstract electrons from H(2)O, generating O(2) and a proton gradient subsequently used for ATP formation. It consists of a core antenna complex that captures photons, and an electron transfer chain that converts photonic excitation into a charge separation.</text>
</comment>
<comment type="subunit">
    <text evidence="2">PSII is composed of 1 copy each of membrane proteins PsbA, PsbB, PsbC, PsbD, PsbE, PsbF, PsbH, PsbI, PsbJ, PsbK, PsbL, PsbM, PsbT, PsbX, PsbY, Psb30/Ycf12, peripheral proteins PsbO, CyanoQ (PsbQ), PsbU, PsbV and a large number of cofactors. It forms dimeric complexes.</text>
</comment>
<comment type="subcellular location">
    <subcellularLocation>
        <location evidence="1">Cellular thylakoid membrane</location>
        <topology evidence="1">Single-pass membrane protein</topology>
    </subcellularLocation>
</comment>
<comment type="similarity">
    <text evidence="1">Belongs to the PsbI family.</text>
</comment>
<protein>
    <recommendedName>
        <fullName evidence="1">Photosystem II reaction center protein I</fullName>
        <shortName evidence="1">PSII-I</shortName>
    </recommendedName>
    <alternativeName>
        <fullName evidence="1">PSII 4.4 kDa protein</fullName>
    </alternativeName>
</protein>
<dbReference type="EMBL" id="BX548174">
    <property type="protein sequence ID" value="CAE18712.1"/>
    <property type="molecule type" value="Genomic_DNA"/>
</dbReference>
<dbReference type="RefSeq" id="WP_002805124.1">
    <property type="nucleotide sequence ID" value="NC_005072.1"/>
</dbReference>
<dbReference type="SMR" id="Q7V339"/>
<dbReference type="STRING" id="59919.PMM0253"/>
<dbReference type="GeneID" id="60200521"/>
<dbReference type="KEGG" id="pmm:PMM0253"/>
<dbReference type="HOGENOM" id="CLU_212150_0_0_3"/>
<dbReference type="Proteomes" id="UP000001026">
    <property type="component" value="Chromosome"/>
</dbReference>
<dbReference type="GO" id="GO:0009539">
    <property type="term" value="C:photosystem II reaction center"/>
    <property type="evidence" value="ECO:0007669"/>
    <property type="project" value="InterPro"/>
</dbReference>
<dbReference type="GO" id="GO:0031676">
    <property type="term" value="C:plasma membrane-derived thylakoid membrane"/>
    <property type="evidence" value="ECO:0007669"/>
    <property type="project" value="UniProtKB-SubCell"/>
</dbReference>
<dbReference type="GO" id="GO:0015979">
    <property type="term" value="P:photosynthesis"/>
    <property type="evidence" value="ECO:0007669"/>
    <property type="project" value="UniProtKB-UniRule"/>
</dbReference>
<dbReference type="HAMAP" id="MF_01316">
    <property type="entry name" value="PSII_PsbI"/>
    <property type="match status" value="1"/>
</dbReference>
<dbReference type="InterPro" id="IPR003686">
    <property type="entry name" value="PSII_PsbI"/>
</dbReference>
<dbReference type="InterPro" id="IPR037271">
    <property type="entry name" value="PSII_PsbI_sf"/>
</dbReference>
<dbReference type="NCBIfam" id="NF002735">
    <property type="entry name" value="PRK02655.1"/>
    <property type="match status" value="1"/>
</dbReference>
<dbReference type="PANTHER" id="PTHR35772">
    <property type="entry name" value="PHOTOSYSTEM II REACTION CENTER PROTEIN I"/>
    <property type="match status" value="1"/>
</dbReference>
<dbReference type="PANTHER" id="PTHR35772:SF1">
    <property type="entry name" value="PHOTOSYSTEM II REACTION CENTER PROTEIN I"/>
    <property type="match status" value="1"/>
</dbReference>
<dbReference type="Pfam" id="PF02532">
    <property type="entry name" value="PsbI"/>
    <property type="match status" value="1"/>
</dbReference>
<dbReference type="SUPFAM" id="SSF161041">
    <property type="entry name" value="Photosystem II reaction center protein I, PsbI"/>
    <property type="match status" value="1"/>
</dbReference>